<protein>
    <recommendedName>
        <fullName evidence="1">Chaperone protein DnaJ</fullName>
    </recommendedName>
</protein>
<proteinExistence type="inferred from homology"/>
<evidence type="ECO:0000255" key="1">
    <source>
        <dbReference type="HAMAP-Rule" id="MF_01152"/>
    </source>
</evidence>
<feature type="chain" id="PRO_1000137733" description="Chaperone protein DnaJ">
    <location>
        <begin position="1"/>
        <end position="379"/>
    </location>
</feature>
<feature type="domain" description="J" evidence="1">
    <location>
        <begin position="5"/>
        <end position="71"/>
    </location>
</feature>
<feature type="repeat" description="CXXCXGXG motif">
    <location>
        <begin position="162"/>
        <end position="169"/>
    </location>
</feature>
<feature type="repeat" description="CXXCXGXG motif">
    <location>
        <begin position="179"/>
        <end position="186"/>
    </location>
</feature>
<feature type="repeat" description="CXXCXGXG motif">
    <location>
        <begin position="205"/>
        <end position="212"/>
    </location>
</feature>
<feature type="repeat" description="CXXCXGXG motif">
    <location>
        <begin position="219"/>
        <end position="226"/>
    </location>
</feature>
<feature type="zinc finger region" description="CR-type" evidence="1">
    <location>
        <begin position="149"/>
        <end position="231"/>
    </location>
</feature>
<feature type="binding site" evidence="1">
    <location>
        <position position="162"/>
    </location>
    <ligand>
        <name>Zn(2+)</name>
        <dbReference type="ChEBI" id="CHEBI:29105"/>
        <label>1</label>
    </ligand>
</feature>
<feature type="binding site" evidence="1">
    <location>
        <position position="165"/>
    </location>
    <ligand>
        <name>Zn(2+)</name>
        <dbReference type="ChEBI" id="CHEBI:29105"/>
        <label>1</label>
    </ligand>
</feature>
<feature type="binding site" evidence="1">
    <location>
        <position position="179"/>
    </location>
    <ligand>
        <name>Zn(2+)</name>
        <dbReference type="ChEBI" id="CHEBI:29105"/>
        <label>2</label>
    </ligand>
</feature>
<feature type="binding site" evidence="1">
    <location>
        <position position="182"/>
    </location>
    <ligand>
        <name>Zn(2+)</name>
        <dbReference type="ChEBI" id="CHEBI:29105"/>
        <label>2</label>
    </ligand>
</feature>
<feature type="binding site" evidence="1">
    <location>
        <position position="205"/>
    </location>
    <ligand>
        <name>Zn(2+)</name>
        <dbReference type="ChEBI" id="CHEBI:29105"/>
        <label>2</label>
    </ligand>
</feature>
<feature type="binding site" evidence="1">
    <location>
        <position position="208"/>
    </location>
    <ligand>
        <name>Zn(2+)</name>
        <dbReference type="ChEBI" id="CHEBI:29105"/>
        <label>2</label>
    </ligand>
</feature>
<feature type="binding site" evidence="1">
    <location>
        <position position="219"/>
    </location>
    <ligand>
        <name>Zn(2+)</name>
        <dbReference type="ChEBI" id="CHEBI:29105"/>
        <label>1</label>
    </ligand>
</feature>
<feature type="binding site" evidence="1">
    <location>
        <position position="222"/>
    </location>
    <ligand>
        <name>Zn(2+)</name>
        <dbReference type="ChEBI" id="CHEBI:29105"/>
        <label>1</label>
    </ligand>
</feature>
<organism>
    <name type="scientific">Thermosipho africanus (strain TCF52B)</name>
    <dbReference type="NCBI Taxonomy" id="484019"/>
    <lineage>
        <taxon>Bacteria</taxon>
        <taxon>Thermotogati</taxon>
        <taxon>Thermotogota</taxon>
        <taxon>Thermotogae</taxon>
        <taxon>Thermotogales</taxon>
        <taxon>Fervidobacteriaceae</taxon>
        <taxon>Thermosipho</taxon>
    </lineage>
</organism>
<comment type="function">
    <text evidence="1">Participates actively in the response to hyperosmotic and heat shock by preventing the aggregation of stress-denatured proteins and by disaggregating proteins, also in an autonomous, DnaK-independent fashion. Unfolded proteins bind initially to DnaJ; upon interaction with the DnaJ-bound protein, DnaK hydrolyzes its bound ATP, resulting in the formation of a stable complex. GrpE releases ADP from DnaK; ATP binding to DnaK triggers the release of the substrate protein, thus completing the reaction cycle. Several rounds of ATP-dependent interactions between DnaJ, DnaK and GrpE are required for fully efficient folding. Also involved, together with DnaK and GrpE, in the DNA replication of plasmids through activation of initiation proteins.</text>
</comment>
<comment type="cofactor">
    <cofactor evidence="1">
        <name>Zn(2+)</name>
        <dbReference type="ChEBI" id="CHEBI:29105"/>
    </cofactor>
    <text evidence="1">Binds 2 Zn(2+) ions per monomer.</text>
</comment>
<comment type="subunit">
    <text evidence="1">Homodimer.</text>
</comment>
<comment type="subcellular location">
    <subcellularLocation>
        <location evidence="1">Cytoplasm</location>
    </subcellularLocation>
</comment>
<comment type="domain">
    <text evidence="1">The J domain is necessary and sufficient to stimulate DnaK ATPase activity. Zinc center 1 plays an important role in the autonomous, DnaK-independent chaperone activity of DnaJ. Zinc center 2 is essential for interaction with DnaK and for DnaJ activity.</text>
</comment>
<comment type="similarity">
    <text evidence="1">Belongs to the DnaJ family.</text>
</comment>
<reference key="1">
    <citation type="journal article" date="2009" name="J. Bacteriol.">
        <title>The genome of Thermosipho africanus TCF52B: lateral genetic connections to the Firmicutes and Archaea.</title>
        <authorList>
            <person name="Nesboe C.L."/>
            <person name="Bapteste E."/>
            <person name="Curtis B."/>
            <person name="Dahle H."/>
            <person name="Lopez P."/>
            <person name="Macleod D."/>
            <person name="Dlutek M."/>
            <person name="Bowman S."/>
            <person name="Zhaxybayeva O."/>
            <person name="Birkeland N.-K."/>
            <person name="Doolittle W.F."/>
        </authorList>
    </citation>
    <scope>NUCLEOTIDE SEQUENCE [LARGE SCALE GENOMIC DNA]</scope>
    <source>
        <strain>TCF52B</strain>
    </source>
</reference>
<sequence>MAKKDYYEILGVSRNASQEEIRQAYKQLIKKWHPDRNHQNRKEAEEKFKEIQEAYEVLSDPEKRAMYDRFGYVGDVPPNAGSGGGFGGFGGFGGFEDIFKDFGDFINNDIFNIFFGDQRTSSRQKQRRAKRGEDINITVDVPFEQVFTGTTIPIEYDRYEVCSHCNGEGVEPGSGWVSCPKCHGTGVVREERRTFLGVIVNQYTCNQCGGTGKIPGETCHVCGGSGRIRKRHRVEVKIPAGVDNGTVIRVQGKGNAGYNGGGYGDLYVNVRITGHIDFERRGNDLIKEIKIDYVEAILGTKVKIKMPDGRVKEVKIPSGVQDGENIYVYGEGVPDMRTGRRGDLILKIKVDIPKRVSRSEKKLLKEIAKLRGKDVDEEE</sequence>
<dbReference type="EMBL" id="CP001185">
    <property type="protein sequence ID" value="ACJ74804.1"/>
    <property type="molecule type" value="Genomic_DNA"/>
</dbReference>
<dbReference type="RefSeq" id="WP_012579485.1">
    <property type="nucleotide sequence ID" value="NC_011653.1"/>
</dbReference>
<dbReference type="SMR" id="B7IFE0"/>
<dbReference type="STRING" id="484019.THA_304"/>
<dbReference type="KEGG" id="taf:THA_304"/>
<dbReference type="eggNOG" id="COG0484">
    <property type="taxonomic scope" value="Bacteria"/>
</dbReference>
<dbReference type="HOGENOM" id="CLU_017633_0_7_0"/>
<dbReference type="OrthoDB" id="9779889at2"/>
<dbReference type="Proteomes" id="UP000002453">
    <property type="component" value="Chromosome"/>
</dbReference>
<dbReference type="GO" id="GO:0005737">
    <property type="term" value="C:cytoplasm"/>
    <property type="evidence" value="ECO:0007669"/>
    <property type="project" value="UniProtKB-SubCell"/>
</dbReference>
<dbReference type="GO" id="GO:0005524">
    <property type="term" value="F:ATP binding"/>
    <property type="evidence" value="ECO:0007669"/>
    <property type="project" value="InterPro"/>
</dbReference>
<dbReference type="GO" id="GO:0031072">
    <property type="term" value="F:heat shock protein binding"/>
    <property type="evidence" value="ECO:0007669"/>
    <property type="project" value="InterPro"/>
</dbReference>
<dbReference type="GO" id="GO:0051082">
    <property type="term" value="F:unfolded protein binding"/>
    <property type="evidence" value="ECO:0007669"/>
    <property type="project" value="UniProtKB-UniRule"/>
</dbReference>
<dbReference type="GO" id="GO:0008270">
    <property type="term" value="F:zinc ion binding"/>
    <property type="evidence" value="ECO:0007669"/>
    <property type="project" value="UniProtKB-UniRule"/>
</dbReference>
<dbReference type="GO" id="GO:0051085">
    <property type="term" value="P:chaperone cofactor-dependent protein refolding"/>
    <property type="evidence" value="ECO:0007669"/>
    <property type="project" value="TreeGrafter"/>
</dbReference>
<dbReference type="GO" id="GO:0006260">
    <property type="term" value="P:DNA replication"/>
    <property type="evidence" value="ECO:0007669"/>
    <property type="project" value="UniProtKB-KW"/>
</dbReference>
<dbReference type="GO" id="GO:0042026">
    <property type="term" value="P:protein refolding"/>
    <property type="evidence" value="ECO:0007669"/>
    <property type="project" value="TreeGrafter"/>
</dbReference>
<dbReference type="GO" id="GO:0009408">
    <property type="term" value="P:response to heat"/>
    <property type="evidence" value="ECO:0007669"/>
    <property type="project" value="InterPro"/>
</dbReference>
<dbReference type="CDD" id="cd06257">
    <property type="entry name" value="DnaJ"/>
    <property type="match status" value="1"/>
</dbReference>
<dbReference type="CDD" id="cd10747">
    <property type="entry name" value="DnaJ_C"/>
    <property type="match status" value="1"/>
</dbReference>
<dbReference type="CDD" id="cd10719">
    <property type="entry name" value="DnaJ_zf"/>
    <property type="match status" value="1"/>
</dbReference>
<dbReference type="FunFam" id="1.10.287.110:FF:000034">
    <property type="entry name" value="Chaperone protein DnaJ"/>
    <property type="match status" value="1"/>
</dbReference>
<dbReference type="FunFam" id="2.60.260.20:FF:000013">
    <property type="entry name" value="DnaJ subfamily B member 11"/>
    <property type="match status" value="1"/>
</dbReference>
<dbReference type="FunFam" id="2.10.230.10:FF:000002">
    <property type="entry name" value="Molecular chaperone DnaJ"/>
    <property type="match status" value="1"/>
</dbReference>
<dbReference type="Gene3D" id="6.20.20.10">
    <property type="match status" value="2"/>
</dbReference>
<dbReference type="Gene3D" id="1.10.287.110">
    <property type="entry name" value="DnaJ domain"/>
    <property type="match status" value="1"/>
</dbReference>
<dbReference type="Gene3D" id="2.60.260.20">
    <property type="entry name" value="Urease metallochaperone UreE, N-terminal domain"/>
    <property type="match status" value="2"/>
</dbReference>
<dbReference type="HAMAP" id="MF_01152">
    <property type="entry name" value="DnaJ"/>
    <property type="match status" value="1"/>
</dbReference>
<dbReference type="InterPro" id="IPR012724">
    <property type="entry name" value="DnaJ"/>
</dbReference>
<dbReference type="InterPro" id="IPR002939">
    <property type="entry name" value="DnaJ_C"/>
</dbReference>
<dbReference type="InterPro" id="IPR001623">
    <property type="entry name" value="DnaJ_domain"/>
</dbReference>
<dbReference type="InterPro" id="IPR018253">
    <property type="entry name" value="DnaJ_domain_CS"/>
</dbReference>
<dbReference type="InterPro" id="IPR008971">
    <property type="entry name" value="HSP40/DnaJ_pept-bd"/>
</dbReference>
<dbReference type="InterPro" id="IPR001305">
    <property type="entry name" value="HSP_DnaJ_Cys-rich_dom"/>
</dbReference>
<dbReference type="InterPro" id="IPR036410">
    <property type="entry name" value="HSP_DnaJ_Cys-rich_dom_sf"/>
</dbReference>
<dbReference type="InterPro" id="IPR036869">
    <property type="entry name" value="J_dom_sf"/>
</dbReference>
<dbReference type="NCBIfam" id="TIGR02349">
    <property type="entry name" value="DnaJ_bact"/>
    <property type="match status" value="1"/>
</dbReference>
<dbReference type="NCBIfam" id="NF008035">
    <property type="entry name" value="PRK10767.1"/>
    <property type="match status" value="1"/>
</dbReference>
<dbReference type="NCBIfam" id="NF010875">
    <property type="entry name" value="PRK14282.1"/>
    <property type="match status" value="1"/>
</dbReference>
<dbReference type="PANTHER" id="PTHR43096">
    <property type="entry name" value="DNAJ HOMOLOG 1, MITOCHONDRIAL-RELATED"/>
    <property type="match status" value="1"/>
</dbReference>
<dbReference type="PANTHER" id="PTHR43096:SF52">
    <property type="entry name" value="DNAJ HOMOLOG 1, MITOCHONDRIAL-RELATED"/>
    <property type="match status" value="1"/>
</dbReference>
<dbReference type="Pfam" id="PF00226">
    <property type="entry name" value="DnaJ"/>
    <property type="match status" value="1"/>
</dbReference>
<dbReference type="Pfam" id="PF01556">
    <property type="entry name" value="DnaJ_C"/>
    <property type="match status" value="1"/>
</dbReference>
<dbReference type="Pfam" id="PF00684">
    <property type="entry name" value="DnaJ_CXXCXGXG"/>
    <property type="match status" value="1"/>
</dbReference>
<dbReference type="PRINTS" id="PR00625">
    <property type="entry name" value="JDOMAIN"/>
</dbReference>
<dbReference type="SMART" id="SM00271">
    <property type="entry name" value="DnaJ"/>
    <property type="match status" value="1"/>
</dbReference>
<dbReference type="SUPFAM" id="SSF46565">
    <property type="entry name" value="Chaperone J-domain"/>
    <property type="match status" value="1"/>
</dbReference>
<dbReference type="SUPFAM" id="SSF57938">
    <property type="entry name" value="DnaJ/Hsp40 cysteine-rich domain"/>
    <property type="match status" value="1"/>
</dbReference>
<dbReference type="SUPFAM" id="SSF49493">
    <property type="entry name" value="HSP40/DnaJ peptide-binding domain"/>
    <property type="match status" value="2"/>
</dbReference>
<dbReference type="PROSITE" id="PS00636">
    <property type="entry name" value="DNAJ_1"/>
    <property type="match status" value="1"/>
</dbReference>
<dbReference type="PROSITE" id="PS50076">
    <property type="entry name" value="DNAJ_2"/>
    <property type="match status" value="1"/>
</dbReference>
<dbReference type="PROSITE" id="PS51188">
    <property type="entry name" value="ZF_CR"/>
    <property type="match status" value="1"/>
</dbReference>
<keyword id="KW-0143">Chaperone</keyword>
<keyword id="KW-0963">Cytoplasm</keyword>
<keyword id="KW-0235">DNA replication</keyword>
<keyword id="KW-0479">Metal-binding</keyword>
<keyword id="KW-1185">Reference proteome</keyword>
<keyword id="KW-0677">Repeat</keyword>
<keyword id="KW-0346">Stress response</keyword>
<keyword id="KW-0862">Zinc</keyword>
<keyword id="KW-0863">Zinc-finger</keyword>
<accession>B7IFE0</accession>
<gene>
    <name evidence="1" type="primary">dnaJ</name>
    <name type="ordered locus">THA_304</name>
</gene>
<name>DNAJ_THEAB</name>